<keyword id="KW-1185">Reference proteome</keyword>
<keyword id="KW-0687">Ribonucleoprotein</keyword>
<keyword id="KW-0689">Ribosomal protein</keyword>
<keyword id="KW-0694">RNA-binding</keyword>
<keyword id="KW-0699">rRNA-binding</keyword>
<feature type="chain" id="PRO_0000345442" description="Small ribosomal subunit protein bS18">
    <location>
        <begin position="1"/>
        <end position="85"/>
    </location>
</feature>
<feature type="region of interest" description="Disordered" evidence="2">
    <location>
        <begin position="1"/>
        <end position="22"/>
    </location>
</feature>
<feature type="compositionally biased region" description="Gly residues" evidence="2">
    <location>
        <begin position="1"/>
        <end position="12"/>
    </location>
</feature>
<reference key="1">
    <citation type="submission" date="2007-04" db="EMBL/GenBank/DDBJ databases">
        <title>Complete genome sequence of the nitrogen-fixing bacterium Azorhizobium caulinodans ORS571.</title>
        <authorList>
            <person name="Lee K.B."/>
            <person name="Backer P.D."/>
            <person name="Aono T."/>
            <person name="Liu C.T."/>
            <person name="Suzuki S."/>
            <person name="Suzuki T."/>
            <person name="Kaneko T."/>
            <person name="Yamada M."/>
            <person name="Tabata S."/>
            <person name="Kupfer D.M."/>
            <person name="Najar F.Z."/>
            <person name="Wiley G.B."/>
            <person name="Roe B."/>
            <person name="Binnewies T."/>
            <person name="Ussery D."/>
            <person name="Vereecke D."/>
            <person name="Gevers D."/>
            <person name="Holsters M."/>
            <person name="Oyaizu H."/>
        </authorList>
    </citation>
    <scope>NUCLEOTIDE SEQUENCE [LARGE SCALE GENOMIC DNA]</scope>
    <source>
        <strain>ATCC 43989 / DSM 5975 / JCM 20966 / LMG 6465 / NBRC 14845 / NCIMB 13405 / ORS 571</strain>
    </source>
</reference>
<dbReference type="EMBL" id="AP009384">
    <property type="protein sequence ID" value="BAF90305.1"/>
    <property type="molecule type" value="Genomic_DNA"/>
</dbReference>
<dbReference type="RefSeq" id="WP_012172827.1">
    <property type="nucleotide sequence ID" value="NC_009937.1"/>
</dbReference>
<dbReference type="SMR" id="A8HVE8"/>
<dbReference type="STRING" id="438753.AZC_4307"/>
<dbReference type="KEGG" id="azc:AZC_4307"/>
<dbReference type="eggNOG" id="COG0238">
    <property type="taxonomic scope" value="Bacteria"/>
</dbReference>
<dbReference type="HOGENOM" id="CLU_148710_0_3_5"/>
<dbReference type="Proteomes" id="UP000000270">
    <property type="component" value="Chromosome"/>
</dbReference>
<dbReference type="GO" id="GO:0022627">
    <property type="term" value="C:cytosolic small ribosomal subunit"/>
    <property type="evidence" value="ECO:0007669"/>
    <property type="project" value="TreeGrafter"/>
</dbReference>
<dbReference type="GO" id="GO:0070181">
    <property type="term" value="F:small ribosomal subunit rRNA binding"/>
    <property type="evidence" value="ECO:0007669"/>
    <property type="project" value="TreeGrafter"/>
</dbReference>
<dbReference type="GO" id="GO:0003735">
    <property type="term" value="F:structural constituent of ribosome"/>
    <property type="evidence" value="ECO:0007669"/>
    <property type="project" value="InterPro"/>
</dbReference>
<dbReference type="GO" id="GO:0006412">
    <property type="term" value="P:translation"/>
    <property type="evidence" value="ECO:0007669"/>
    <property type="project" value="UniProtKB-UniRule"/>
</dbReference>
<dbReference type="Gene3D" id="4.10.640.10">
    <property type="entry name" value="Ribosomal protein S18"/>
    <property type="match status" value="1"/>
</dbReference>
<dbReference type="HAMAP" id="MF_00270">
    <property type="entry name" value="Ribosomal_bS18"/>
    <property type="match status" value="1"/>
</dbReference>
<dbReference type="InterPro" id="IPR001648">
    <property type="entry name" value="Ribosomal_bS18"/>
</dbReference>
<dbReference type="InterPro" id="IPR018275">
    <property type="entry name" value="Ribosomal_bS18_CS"/>
</dbReference>
<dbReference type="InterPro" id="IPR036870">
    <property type="entry name" value="Ribosomal_bS18_sf"/>
</dbReference>
<dbReference type="NCBIfam" id="TIGR00165">
    <property type="entry name" value="S18"/>
    <property type="match status" value="1"/>
</dbReference>
<dbReference type="PANTHER" id="PTHR13479">
    <property type="entry name" value="30S RIBOSOMAL PROTEIN S18"/>
    <property type="match status" value="1"/>
</dbReference>
<dbReference type="PANTHER" id="PTHR13479:SF40">
    <property type="entry name" value="SMALL RIBOSOMAL SUBUNIT PROTEIN BS18M"/>
    <property type="match status" value="1"/>
</dbReference>
<dbReference type="Pfam" id="PF01084">
    <property type="entry name" value="Ribosomal_S18"/>
    <property type="match status" value="1"/>
</dbReference>
<dbReference type="PRINTS" id="PR00974">
    <property type="entry name" value="RIBOSOMALS18"/>
</dbReference>
<dbReference type="SUPFAM" id="SSF46911">
    <property type="entry name" value="Ribosomal protein S18"/>
    <property type="match status" value="1"/>
</dbReference>
<dbReference type="PROSITE" id="PS00057">
    <property type="entry name" value="RIBOSOMAL_S18"/>
    <property type="match status" value="1"/>
</dbReference>
<sequence length="85" mass="9575">MAFAQAGGGGGQRRPFFRRRKTCPFSGPNAPKIDYKDVRLLQRYISERGKIVPSRITAVSAKKQRELSAAIKRARFLGLLPFVIR</sequence>
<proteinExistence type="inferred from homology"/>
<organism>
    <name type="scientific">Azorhizobium caulinodans (strain ATCC 43989 / DSM 5975 / JCM 20966 / LMG 6465 / NBRC 14845 / NCIMB 13405 / ORS 571)</name>
    <dbReference type="NCBI Taxonomy" id="438753"/>
    <lineage>
        <taxon>Bacteria</taxon>
        <taxon>Pseudomonadati</taxon>
        <taxon>Pseudomonadota</taxon>
        <taxon>Alphaproteobacteria</taxon>
        <taxon>Hyphomicrobiales</taxon>
        <taxon>Xanthobacteraceae</taxon>
        <taxon>Azorhizobium</taxon>
    </lineage>
</organism>
<comment type="function">
    <text evidence="1">Binds as a heterodimer with protein bS6 to the central domain of the 16S rRNA, where it helps stabilize the platform of the 30S subunit.</text>
</comment>
<comment type="subunit">
    <text evidence="1">Part of the 30S ribosomal subunit. Forms a tight heterodimer with protein bS6.</text>
</comment>
<comment type="similarity">
    <text evidence="1">Belongs to the bacterial ribosomal protein bS18 family.</text>
</comment>
<protein>
    <recommendedName>
        <fullName evidence="1">Small ribosomal subunit protein bS18</fullName>
    </recommendedName>
    <alternativeName>
        <fullName evidence="3">30S ribosomal protein S18</fullName>
    </alternativeName>
</protein>
<evidence type="ECO:0000255" key="1">
    <source>
        <dbReference type="HAMAP-Rule" id="MF_00270"/>
    </source>
</evidence>
<evidence type="ECO:0000256" key="2">
    <source>
        <dbReference type="SAM" id="MobiDB-lite"/>
    </source>
</evidence>
<evidence type="ECO:0000305" key="3"/>
<name>RS18_AZOC5</name>
<gene>
    <name evidence="1" type="primary">rpsR</name>
    <name type="ordered locus">AZC_4307</name>
</gene>
<accession>A8HVE8</accession>